<comment type="function">
    <text evidence="2">Has a role as neurotrophic factor involved in neuronal survival and neurobiological functions.</text>
</comment>
<comment type="subcellular location">
    <subcellularLocation>
        <location evidence="2">Cytoplasm</location>
    </subcellularLocation>
    <subcellularLocation>
        <location evidence="2">Nucleus</location>
    </subcellularLocation>
</comment>
<comment type="tissue specificity">
    <text evidence="2">Mainly expressed in different brain regions, including cortex, amygdala and hippocampus (at protein level) (PubMed:30137205). Expressed by neurons and astrocytes (PubMed:30137205).</text>
</comment>
<comment type="developmental stage">
    <text evidence="2">Expressed as early as 13.5 dpc, increases and peaks at 2 weeks after birth and is highly expressed until adulthood.</text>
</comment>
<comment type="disruption phenotype">
    <text evidence="2">Mutant mice grow and develop normally but exhibit impairments in spatial learning and memory and impairments in short- and long-term memory, accompanied with increased level of anxiety-like behaviors in open-field test. They also show decreased level of depression-like behaviors in forced-swim test and tail-suspension test (PubMed:30137205). They show neuronal loss, defects in dendritic and synaptic morphology, and apoptosis in the brain (PubMed:30137205).</text>
</comment>
<comment type="similarity">
    <text evidence="3">Belongs to the TAFA family.</text>
</comment>
<comment type="sequence caution" evidence="3">
    <conflict type="erroneous initiation">
        <sequence resource="EMBL-CDS" id="AAH27082"/>
    </conflict>
    <text>Extended N-terminus.</text>
</comment>
<evidence type="ECO:0000255" key="1"/>
<evidence type="ECO:0000269" key="2">
    <source>
    </source>
</evidence>
<evidence type="ECO:0000305" key="3"/>
<name>TAFA2_MOUSE</name>
<protein>
    <recommendedName>
        <fullName evidence="3">Chemokine-like protein TAFA-2</fullName>
    </recommendedName>
</protein>
<feature type="signal peptide" evidence="1">
    <location>
        <begin position="1"/>
        <end position="30"/>
    </location>
</feature>
<feature type="chain" id="PRO_0000042724" description="Chemokine-like protein TAFA-2">
    <location>
        <begin position="31"/>
        <end position="131"/>
    </location>
</feature>
<keyword id="KW-0963">Cytoplasm</keyword>
<keyword id="KW-0539">Nucleus</keyword>
<keyword id="KW-1185">Reference proteome</keyword>
<keyword id="KW-0732">Signal</keyword>
<dbReference type="EMBL" id="AY325121">
    <property type="protein sequence ID" value="AAP92413.1"/>
    <property type="molecule type" value="mRNA"/>
</dbReference>
<dbReference type="EMBL" id="AK164201">
    <property type="protein sequence ID" value="BAE37679.1"/>
    <property type="molecule type" value="mRNA"/>
</dbReference>
<dbReference type="EMBL" id="BC027082">
    <property type="protein sequence ID" value="AAH27082.1"/>
    <property type="status" value="ALT_INIT"/>
    <property type="molecule type" value="mRNA"/>
</dbReference>
<dbReference type="CCDS" id="CCDS88096.1"/>
<dbReference type="RefSeq" id="NP_001239316.1">
    <property type="nucleotide sequence ID" value="NM_001252387.1"/>
</dbReference>
<dbReference type="RefSeq" id="NP_877959.2">
    <property type="nucleotide sequence ID" value="NM_182807.3"/>
</dbReference>
<dbReference type="FunCoup" id="Q7TPG7">
    <property type="interactions" value="1014"/>
</dbReference>
<dbReference type="STRING" id="10090.ENSMUSP00000050199"/>
<dbReference type="PhosphoSitePlus" id="Q7TPG7"/>
<dbReference type="PaxDb" id="10090-ENSMUSP00000050199"/>
<dbReference type="ProteomicsDB" id="277017"/>
<dbReference type="Antibodypedia" id="56101">
    <property type="antibodies" value="33 antibodies from 14 providers"/>
</dbReference>
<dbReference type="DNASU" id="268354"/>
<dbReference type="Ensembl" id="ENSMUST00000238972.2">
    <property type="protein sequence ID" value="ENSMUSP00000159016.2"/>
    <property type="gene ID" value="ENSMUSG00000044071.10"/>
</dbReference>
<dbReference type="GeneID" id="268354"/>
<dbReference type="KEGG" id="mmu:268354"/>
<dbReference type="UCSC" id="uc007hgu.2">
    <property type="organism name" value="mouse"/>
</dbReference>
<dbReference type="AGR" id="MGI:2143691"/>
<dbReference type="CTD" id="338811"/>
<dbReference type="MGI" id="MGI:2143691">
    <property type="gene designation" value="Tafa2"/>
</dbReference>
<dbReference type="VEuPathDB" id="HostDB:ENSMUSG00000044071"/>
<dbReference type="eggNOG" id="ENOG502S0VQ">
    <property type="taxonomic scope" value="Eukaryota"/>
</dbReference>
<dbReference type="GeneTree" id="ENSGT00940000161214"/>
<dbReference type="InParanoid" id="Q7TPG7"/>
<dbReference type="OMA" id="VEMEIHR"/>
<dbReference type="OrthoDB" id="300at9989"/>
<dbReference type="PhylomeDB" id="Q7TPG7"/>
<dbReference type="TreeFam" id="TF331749"/>
<dbReference type="BioGRID-ORCS" id="268354">
    <property type="hits" value="2 hits in 78 CRISPR screens"/>
</dbReference>
<dbReference type="ChiTaRS" id="Tafa2">
    <property type="organism name" value="mouse"/>
</dbReference>
<dbReference type="PRO" id="PR:Q7TPG7"/>
<dbReference type="Proteomes" id="UP000000589">
    <property type="component" value="Chromosome 10"/>
</dbReference>
<dbReference type="RNAct" id="Q7TPG7">
    <property type="molecule type" value="protein"/>
</dbReference>
<dbReference type="Bgee" id="ENSMUSG00000044071">
    <property type="expression patterns" value="Expressed in piriform cortex and 140 other cell types or tissues"/>
</dbReference>
<dbReference type="ExpressionAtlas" id="Q7TPG7">
    <property type="expression patterns" value="baseline and differential"/>
</dbReference>
<dbReference type="GO" id="GO:0005737">
    <property type="term" value="C:cytoplasm"/>
    <property type="evidence" value="ECO:0000314"/>
    <property type="project" value="UniProtKB"/>
</dbReference>
<dbReference type="GO" id="GO:0005634">
    <property type="term" value="C:nucleus"/>
    <property type="evidence" value="ECO:0000314"/>
    <property type="project" value="UniProtKB"/>
</dbReference>
<dbReference type="GO" id="GO:0007613">
    <property type="term" value="P:memory"/>
    <property type="evidence" value="ECO:0000315"/>
    <property type="project" value="UniProtKB"/>
</dbReference>
<dbReference type="GO" id="GO:0008542">
    <property type="term" value="P:visual learning"/>
    <property type="evidence" value="ECO:0000315"/>
    <property type="project" value="UniProtKB"/>
</dbReference>
<dbReference type="InterPro" id="IPR020350">
    <property type="entry name" value="Chemokine-like_TAFA"/>
</dbReference>
<dbReference type="InterPro" id="IPR051743">
    <property type="entry name" value="TAFA_chemokine-like"/>
</dbReference>
<dbReference type="PANTHER" id="PTHR31770">
    <property type="entry name" value="CHEMOKINE-LIKE PROTEIN TAFA FAMILY MEMBER"/>
    <property type="match status" value="1"/>
</dbReference>
<dbReference type="PANTHER" id="PTHR31770:SF1">
    <property type="entry name" value="CHEMOKINE-LIKE PROTEIN TAFA-2"/>
    <property type="match status" value="1"/>
</dbReference>
<dbReference type="Pfam" id="PF12020">
    <property type="entry name" value="TAFA"/>
    <property type="match status" value="1"/>
</dbReference>
<organism>
    <name type="scientific">Mus musculus</name>
    <name type="common">Mouse</name>
    <dbReference type="NCBI Taxonomy" id="10090"/>
    <lineage>
        <taxon>Eukaryota</taxon>
        <taxon>Metazoa</taxon>
        <taxon>Chordata</taxon>
        <taxon>Craniata</taxon>
        <taxon>Vertebrata</taxon>
        <taxon>Euteleostomi</taxon>
        <taxon>Mammalia</taxon>
        <taxon>Eutheria</taxon>
        <taxon>Euarchontoglires</taxon>
        <taxon>Glires</taxon>
        <taxon>Rodentia</taxon>
        <taxon>Myomorpha</taxon>
        <taxon>Muroidea</taxon>
        <taxon>Muridae</taxon>
        <taxon>Murinae</taxon>
        <taxon>Mus</taxon>
        <taxon>Mus</taxon>
    </lineage>
</organism>
<proteinExistence type="evidence at protein level"/>
<accession>Q7TPG7</accession>
<accession>Q5M9Q3</accession>
<gene>
    <name type="primary">Tafa2</name>
    <name type="synonym">Fam19a2</name>
</gene>
<reference key="1">
    <citation type="journal article" date="2004" name="Genomics">
        <title>TAFA: a novel secreted family with conserved cysteine residues and restricted expression in the brain.</title>
        <authorList>
            <person name="Tom Tang Y."/>
            <person name="Emtage P."/>
            <person name="Funk W.D."/>
            <person name="Hu T."/>
            <person name="Arterburn M."/>
            <person name="Park E.E."/>
            <person name="Rupp F."/>
        </authorList>
    </citation>
    <scope>NUCLEOTIDE SEQUENCE [MRNA]</scope>
    <source>
        <strain>C57BL/6J</strain>
    </source>
</reference>
<reference key="2">
    <citation type="journal article" date="2005" name="Science">
        <title>The transcriptional landscape of the mammalian genome.</title>
        <authorList>
            <person name="Carninci P."/>
            <person name="Kasukawa T."/>
            <person name="Katayama S."/>
            <person name="Gough J."/>
            <person name="Frith M.C."/>
            <person name="Maeda N."/>
            <person name="Oyama R."/>
            <person name="Ravasi T."/>
            <person name="Lenhard B."/>
            <person name="Wells C."/>
            <person name="Kodzius R."/>
            <person name="Shimokawa K."/>
            <person name="Bajic V.B."/>
            <person name="Brenner S.E."/>
            <person name="Batalov S."/>
            <person name="Forrest A.R."/>
            <person name="Zavolan M."/>
            <person name="Davis M.J."/>
            <person name="Wilming L.G."/>
            <person name="Aidinis V."/>
            <person name="Allen J.E."/>
            <person name="Ambesi-Impiombato A."/>
            <person name="Apweiler R."/>
            <person name="Aturaliya R.N."/>
            <person name="Bailey T.L."/>
            <person name="Bansal M."/>
            <person name="Baxter L."/>
            <person name="Beisel K.W."/>
            <person name="Bersano T."/>
            <person name="Bono H."/>
            <person name="Chalk A.M."/>
            <person name="Chiu K.P."/>
            <person name="Choudhary V."/>
            <person name="Christoffels A."/>
            <person name="Clutterbuck D.R."/>
            <person name="Crowe M.L."/>
            <person name="Dalla E."/>
            <person name="Dalrymple B.P."/>
            <person name="de Bono B."/>
            <person name="Della Gatta G."/>
            <person name="di Bernardo D."/>
            <person name="Down T."/>
            <person name="Engstrom P."/>
            <person name="Fagiolini M."/>
            <person name="Faulkner G."/>
            <person name="Fletcher C.F."/>
            <person name="Fukushima T."/>
            <person name="Furuno M."/>
            <person name="Futaki S."/>
            <person name="Gariboldi M."/>
            <person name="Georgii-Hemming P."/>
            <person name="Gingeras T.R."/>
            <person name="Gojobori T."/>
            <person name="Green R.E."/>
            <person name="Gustincich S."/>
            <person name="Harbers M."/>
            <person name="Hayashi Y."/>
            <person name="Hensch T.K."/>
            <person name="Hirokawa N."/>
            <person name="Hill D."/>
            <person name="Huminiecki L."/>
            <person name="Iacono M."/>
            <person name="Ikeo K."/>
            <person name="Iwama A."/>
            <person name="Ishikawa T."/>
            <person name="Jakt M."/>
            <person name="Kanapin A."/>
            <person name="Katoh M."/>
            <person name="Kawasawa Y."/>
            <person name="Kelso J."/>
            <person name="Kitamura H."/>
            <person name="Kitano H."/>
            <person name="Kollias G."/>
            <person name="Krishnan S.P."/>
            <person name="Kruger A."/>
            <person name="Kummerfeld S.K."/>
            <person name="Kurochkin I.V."/>
            <person name="Lareau L.F."/>
            <person name="Lazarevic D."/>
            <person name="Lipovich L."/>
            <person name="Liu J."/>
            <person name="Liuni S."/>
            <person name="McWilliam S."/>
            <person name="Madan Babu M."/>
            <person name="Madera M."/>
            <person name="Marchionni L."/>
            <person name="Matsuda H."/>
            <person name="Matsuzawa S."/>
            <person name="Miki H."/>
            <person name="Mignone F."/>
            <person name="Miyake S."/>
            <person name="Morris K."/>
            <person name="Mottagui-Tabar S."/>
            <person name="Mulder N."/>
            <person name="Nakano N."/>
            <person name="Nakauchi H."/>
            <person name="Ng P."/>
            <person name="Nilsson R."/>
            <person name="Nishiguchi S."/>
            <person name="Nishikawa S."/>
            <person name="Nori F."/>
            <person name="Ohara O."/>
            <person name="Okazaki Y."/>
            <person name="Orlando V."/>
            <person name="Pang K.C."/>
            <person name="Pavan W.J."/>
            <person name="Pavesi G."/>
            <person name="Pesole G."/>
            <person name="Petrovsky N."/>
            <person name="Piazza S."/>
            <person name="Reed J."/>
            <person name="Reid J.F."/>
            <person name="Ring B.Z."/>
            <person name="Ringwald M."/>
            <person name="Rost B."/>
            <person name="Ruan Y."/>
            <person name="Salzberg S.L."/>
            <person name="Sandelin A."/>
            <person name="Schneider C."/>
            <person name="Schoenbach C."/>
            <person name="Sekiguchi K."/>
            <person name="Semple C.A."/>
            <person name="Seno S."/>
            <person name="Sessa L."/>
            <person name="Sheng Y."/>
            <person name="Shibata Y."/>
            <person name="Shimada H."/>
            <person name="Shimada K."/>
            <person name="Silva D."/>
            <person name="Sinclair B."/>
            <person name="Sperling S."/>
            <person name="Stupka E."/>
            <person name="Sugiura K."/>
            <person name="Sultana R."/>
            <person name="Takenaka Y."/>
            <person name="Taki K."/>
            <person name="Tammoja K."/>
            <person name="Tan S.L."/>
            <person name="Tang S."/>
            <person name="Taylor M.S."/>
            <person name="Tegner J."/>
            <person name="Teichmann S.A."/>
            <person name="Ueda H.R."/>
            <person name="van Nimwegen E."/>
            <person name="Verardo R."/>
            <person name="Wei C.L."/>
            <person name="Yagi K."/>
            <person name="Yamanishi H."/>
            <person name="Zabarovsky E."/>
            <person name="Zhu S."/>
            <person name="Zimmer A."/>
            <person name="Hide W."/>
            <person name="Bult C."/>
            <person name="Grimmond S.M."/>
            <person name="Teasdale R.D."/>
            <person name="Liu E.T."/>
            <person name="Brusic V."/>
            <person name="Quackenbush J."/>
            <person name="Wahlestedt C."/>
            <person name="Mattick J.S."/>
            <person name="Hume D.A."/>
            <person name="Kai C."/>
            <person name="Sasaki D."/>
            <person name="Tomaru Y."/>
            <person name="Fukuda S."/>
            <person name="Kanamori-Katayama M."/>
            <person name="Suzuki M."/>
            <person name="Aoki J."/>
            <person name="Arakawa T."/>
            <person name="Iida J."/>
            <person name="Imamura K."/>
            <person name="Itoh M."/>
            <person name="Kato T."/>
            <person name="Kawaji H."/>
            <person name="Kawagashira N."/>
            <person name="Kawashima T."/>
            <person name="Kojima M."/>
            <person name="Kondo S."/>
            <person name="Konno H."/>
            <person name="Nakano K."/>
            <person name="Ninomiya N."/>
            <person name="Nishio T."/>
            <person name="Okada M."/>
            <person name="Plessy C."/>
            <person name="Shibata K."/>
            <person name="Shiraki T."/>
            <person name="Suzuki S."/>
            <person name="Tagami M."/>
            <person name="Waki K."/>
            <person name="Watahiki A."/>
            <person name="Okamura-Oho Y."/>
            <person name="Suzuki H."/>
            <person name="Kawai J."/>
            <person name="Hayashizaki Y."/>
        </authorList>
    </citation>
    <scope>NUCLEOTIDE SEQUENCE [LARGE SCALE MRNA]</scope>
    <source>
        <strain>C57BL/6J</strain>
        <tissue>Hippocampus</tissue>
    </source>
</reference>
<reference key="3">
    <citation type="journal article" date="2004" name="Genome Res.">
        <title>The status, quality, and expansion of the NIH full-length cDNA project: the Mammalian Gene Collection (MGC).</title>
        <authorList>
            <consortium name="The MGC Project Team"/>
        </authorList>
    </citation>
    <scope>NUCLEOTIDE SEQUENCE [LARGE SCALE MRNA]</scope>
    <source>
        <tissue>Eye</tissue>
    </source>
</reference>
<reference key="4">
    <citation type="journal article" date="2010" name="Cell">
        <title>A tissue-specific atlas of mouse protein phosphorylation and expression.</title>
        <authorList>
            <person name="Huttlin E.L."/>
            <person name="Jedrychowski M.P."/>
            <person name="Elias J.E."/>
            <person name="Goswami T."/>
            <person name="Rad R."/>
            <person name="Beausoleil S.A."/>
            <person name="Villen J."/>
            <person name="Haas W."/>
            <person name="Sowa M.E."/>
            <person name="Gygi S.P."/>
        </authorList>
    </citation>
    <scope>IDENTIFICATION BY MASS SPECTROMETRY [LARGE SCALE ANALYSIS]</scope>
    <source>
        <tissue>Brain</tissue>
    </source>
</reference>
<reference key="5">
    <citation type="journal article" date="2018" name="Acta Biochim. Biophys. Sin.">
        <title>Tafa-2 plays an essential role in neuronal survival and neurobiological function in mice.</title>
        <authorList>
            <person name="Wang X."/>
            <person name="Shen C."/>
            <person name="Chen X."/>
            <person name="Wang J."/>
            <person name="Cui X."/>
            <person name="Wang Y."/>
            <person name="Zhang H."/>
            <person name="Tang L."/>
            <person name="Lu S."/>
            <person name="Fei J."/>
            <person name="Wang Z."/>
        </authorList>
    </citation>
    <scope>FUNCTION</scope>
    <scope>DISRUPTION PHENOTYPE</scope>
    <scope>TISSUE SPECIFICITY</scope>
    <scope>DEVELOPMENTAL STAGE</scope>
    <scope>SUBCELLULAR LOCATION</scope>
</reference>
<sequence>MNKRYLQKATQGKLLIIIFIVTLWGKAVSSANHHKAHHVRTGTCEVVALHRCCNKNKIEERSQTVKCSCFPGQVAGTTRAAPSCVDASIVEQKWWCHMQPCLEGEECKVLPDRKGWSCSSGNKVKTTRVTH</sequence>